<proteinExistence type="inferred from homology"/>
<comment type="function">
    <text evidence="1">One of the components of the core complex of photosystem II (PSII), required for its stability and/or assembly. PSII is a light-driven water:plastoquinone oxidoreductase that uses light energy to abstract electrons from H(2)O, generating O(2) and a proton gradient subsequently used for ATP formation. It consists of a core antenna complex that captures photons, and an electron transfer chain that converts photonic excitation into a charge separation.</text>
</comment>
<comment type="subunit">
    <text evidence="1">PSII is composed of 1 copy each of membrane proteins PsbA, PsbB, PsbC, PsbD, PsbE, PsbF, PsbH, PsbI, PsbJ, PsbK, PsbL, PsbM, PsbT, PsbX, PsbY, PsbZ, Psb30/Ycf12, at least 3 peripheral proteins of the oxygen-evolving complex and a large number of cofactors. It forms dimeric complexes.</text>
</comment>
<comment type="subcellular location">
    <subcellularLocation>
        <location evidence="1">Plastid</location>
        <location evidence="1">Organellar chromatophore thylakoid membrane</location>
        <topology evidence="1">Single-pass membrane protein</topology>
    </subcellularLocation>
</comment>
<comment type="similarity">
    <text evidence="1">Belongs to the PsbI family.</text>
</comment>
<evidence type="ECO:0000255" key="1">
    <source>
        <dbReference type="HAMAP-Rule" id="MF_01316"/>
    </source>
</evidence>
<name>PSBI_PAUCH</name>
<sequence>MLALKISVYSVVFFFIGIFVFGFLASDPSRTPSRKDLED</sequence>
<geneLocation type="organellar chromatophore"/>
<accession>B1X4T6</accession>
<reference key="1">
    <citation type="journal article" date="2008" name="Curr. Biol.">
        <title>Chromatophore genome sequence of Paulinella sheds light on acquisition of photosynthesis by eukaryotes.</title>
        <authorList>
            <person name="Nowack E.C.M."/>
            <person name="Melkonian M."/>
            <person name="Gloeckner G."/>
        </authorList>
    </citation>
    <scope>NUCLEOTIDE SEQUENCE [LARGE SCALE GENOMIC DNA]</scope>
</reference>
<keyword id="KW-0472">Membrane</keyword>
<keyword id="KW-0994">Organellar chromatophore</keyword>
<keyword id="KW-0602">Photosynthesis</keyword>
<keyword id="KW-0604">Photosystem II</keyword>
<keyword id="KW-0934">Plastid</keyword>
<keyword id="KW-0674">Reaction center</keyword>
<keyword id="KW-0793">Thylakoid</keyword>
<keyword id="KW-0812">Transmembrane</keyword>
<keyword id="KW-1133">Transmembrane helix</keyword>
<feature type="chain" id="PRO_0000353245" description="Photosystem II reaction center protein I">
    <location>
        <begin position="1"/>
        <end position="39"/>
    </location>
</feature>
<feature type="transmembrane region" description="Helical" evidence="1">
    <location>
        <begin position="6"/>
        <end position="26"/>
    </location>
</feature>
<dbReference type="EMBL" id="CP000815">
    <property type="protein sequence ID" value="ACB42955.1"/>
    <property type="molecule type" value="Genomic_DNA"/>
</dbReference>
<dbReference type="RefSeq" id="YP_002049165.1">
    <property type="nucleotide sequence ID" value="NC_011087.1"/>
</dbReference>
<dbReference type="SMR" id="B1X4T6"/>
<dbReference type="GeneID" id="6481945"/>
<dbReference type="GO" id="GO:0070118">
    <property type="term" value="C:organellar chromatophore thylakoid membrane"/>
    <property type="evidence" value="ECO:0007669"/>
    <property type="project" value="UniProtKB-SubCell"/>
</dbReference>
<dbReference type="GO" id="GO:0009539">
    <property type="term" value="C:photosystem II reaction center"/>
    <property type="evidence" value="ECO:0007669"/>
    <property type="project" value="InterPro"/>
</dbReference>
<dbReference type="GO" id="GO:0009536">
    <property type="term" value="C:plastid"/>
    <property type="evidence" value="ECO:0007669"/>
    <property type="project" value="UniProtKB-KW"/>
</dbReference>
<dbReference type="GO" id="GO:0015979">
    <property type="term" value="P:photosynthesis"/>
    <property type="evidence" value="ECO:0007669"/>
    <property type="project" value="UniProtKB-UniRule"/>
</dbReference>
<dbReference type="HAMAP" id="MF_01316">
    <property type="entry name" value="PSII_PsbI"/>
    <property type="match status" value="1"/>
</dbReference>
<dbReference type="InterPro" id="IPR003686">
    <property type="entry name" value="PSII_PsbI"/>
</dbReference>
<dbReference type="InterPro" id="IPR037271">
    <property type="entry name" value="PSII_PsbI_sf"/>
</dbReference>
<dbReference type="NCBIfam" id="NF002735">
    <property type="entry name" value="PRK02655.1"/>
    <property type="match status" value="1"/>
</dbReference>
<dbReference type="PANTHER" id="PTHR35772">
    <property type="entry name" value="PHOTOSYSTEM II REACTION CENTER PROTEIN I"/>
    <property type="match status" value="1"/>
</dbReference>
<dbReference type="PANTHER" id="PTHR35772:SF1">
    <property type="entry name" value="PHOTOSYSTEM II REACTION CENTER PROTEIN I"/>
    <property type="match status" value="1"/>
</dbReference>
<dbReference type="Pfam" id="PF02532">
    <property type="entry name" value="PsbI"/>
    <property type="match status" value="1"/>
</dbReference>
<dbReference type="SUPFAM" id="SSF161041">
    <property type="entry name" value="Photosystem II reaction center protein I, PsbI"/>
    <property type="match status" value="1"/>
</dbReference>
<gene>
    <name evidence="1" type="primary">psbI</name>
    <name type="ordered locus">PCC_0521</name>
</gene>
<protein>
    <recommendedName>
        <fullName evidence="1">Photosystem II reaction center protein I</fullName>
        <shortName evidence="1">PSII-I</shortName>
    </recommendedName>
    <alternativeName>
        <fullName evidence="1">PSII 4.4 kDa protein</fullName>
    </alternativeName>
</protein>
<organism>
    <name type="scientific">Paulinella chromatophora</name>
    <dbReference type="NCBI Taxonomy" id="39717"/>
    <lineage>
        <taxon>Eukaryota</taxon>
        <taxon>Sar</taxon>
        <taxon>Rhizaria</taxon>
        <taxon>Cercozoa</taxon>
        <taxon>Imbricatea</taxon>
        <taxon>Silicofilosea</taxon>
        <taxon>Euglyphida</taxon>
        <taxon>Paulinellidae</taxon>
        <taxon>Paulinella</taxon>
    </lineage>
</organism>